<proteinExistence type="inferred from homology"/>
<evidence type="ECO:0000255" key="1">
    <source>
        <dbReference type="HAMAP-Rule" id="MF_00135"/>
    </source>
</evidence>
<reference key="1">
    <citation type="journal article" date="2010" name="Environ. Microbiol.">
        <title>The genome of Syntrophomonas wolfei: new insights into syntrophic metabolism and biohydrogen production.</title>
        <authorList>
            <person name="Sieber J.R."/>
            <person name="Sims D.R."/>
            <person name="Han C."/>
            <person name="Kim E."/>
            <person name="Lykidis A."/>
            <person name="Lapidus A.L."/>
            <person name="McDonnald E."/>
            <person name="Rohlin L."/>
            <person name="Culley D.E."/>
            <person name="Gunsalus R."/>
            <person name="McInerney M.J."/>
        </authorList>
    </citation>
    <scope>NUCLEOTIDE SEQUENCE [LARGE SCALE GENOMIC DNA]</scope>
    <source>
        <strain>DSM 2245B / Goettingen</strain>
    </source>
</reference>
<feature type="chain" id="PRO_1000018644" description="N-(5'-phosphoribosyl)anthranilate isomerase">
    <location>
        <begin position="1"/>
        <end position="204"/>
    </location>
</feature>
<protein>
    <recommendedName>
        <fullName evidence="1">N-(5'-phosphoribosyl)anthranilate isomerase</fullName>
        <shortName evidence="1">PRAI</shortName>
        <ecNumber evidence="1">5.3.1.24</ecNumber>
    </recommendedName>
</protein>
<accession>Q0B004</accession>
<name>TRPF_SYNWW</name>
<sequence length="204" mass="22787">MTRVKICGIRSLEEAIAAREAGAWAIGQVFAPSPRRLEVDIAAAINRELGQSILKIGVFVNEEAENLRRIVASCRLDMVQLHGDEEPAYLEEVSVPVIKSFRVRGSLELEQLKRWRPWAYLFDSYHPGVYGGTGESFDWSFLQEIARQERIILAGGLNTENVGRAIHQLRPLVVDVSSGVEYPSGGKDPAKIREFINIVQEQAT</sequence>
<comment type="catalytic activity">
    <reaction evidence="1">
        <text>N-(5-phospho-beta-D-ribosyl)anthranilate = 1-(2-carboxyphenylamino)-1-deoxy-D-ribulose 5-phosphate</text>
        <dbReference type="Rhea" id="RHEA:21540"/>
        <dbReference type="ChEBI" id="CHEBI:18277"/>
        <dbReference type="ChEBI" id="CHEBI:58613"/>
        <dbReference type="EC" id="5.3.1.24"/>
    </reaction>
</comment>
<comment type="pathway">
    <text evidence="1">Amino-acid biosynthesis; L-tryptophan biosynthesis; L-tryptophan from chorismate: step 3/5.</text>
</comment>
<comment type="similarity">
    <text evidence="1">Belongs to the TrpF family.</text>
</comment>
<keyword id="KW-0028">Amino-acid biosynthesis</keyword>
<keyword id="KW-0057">Aromatic amino acid biosynthesis</keyword>
<keyword id="KW-0413">Isomerase</keyword>
<keyword id="KW-1185">Reference proteome</keyword>
<keyword id="KW-0822">Tryptophan biosynthesis</keyword>
<gene>
    <name evidence="1" type="primary">trpF</name>
    <name type="ordered locus">Swol_0360</name>
</gene>
<organism>
    <name type="scientific">Syntrophomonas wolfei subsp. wolfei (strain DSM 2245B / Goettingen)</name>
    <dbReference type="NCBI Taxonomy" id="335541"/>
    <lineage>
        <taxon>Bacteria</taxon>
        <taxon>Bacillati</taxon>
        <taxon>Bacillota</taxon>
        <taxon>Clostridia</taxon>
        <taxon>Eubacteriales</taxon>
        <taxon>Syntrophomonadaceae</taxon>
        <taxon>Syntrophomonas</taxon>
    </lineage>
</organism>
<dbReference type="EC" id="5.3.1.24" evidence="1"/>
<dbReference type="EMBL" id="CP000448">
    <property type="protein sequence ID" value="ABI67700.1"/>
    <property type="molecule type" value="Genomic_DNA"/>
</dbReference>
<dbReference type="RefSeq" id="WP_011639808.1">
    <property type="nucleotide sequence ID" value="NC_008346.1"/>
</dbReference>
<dbReference type="SMR" id="Q0B004"/>
<dbReference type="STRING" id="335541.Swol_0360"/>
<dbReference type="KEGG" id="swo:Swol_0360"/>
<dbReference type="eggNOG" id="COG0135">
    <property type="taxonomic scope" value="Bacteria"/>
</dbReference>
<dbReference type="HOGENOM" id="CLU_076364_1_0_9"/>
<dbReference type="OrthoDB" id="9786954at2"/>
<dbReference type="UniPathway" id="UPA00035">
    <property type="reaction ID" value="UER00042"/>
</dbReference>
<dbReference type="Proteomes" id="UP000001968">
    <property type="component" value="Chromosome"/>
</dbReference>
<dbReference type="GO" id="GO:0004640">
    <property type="term" value="F:phosphoribosylanthranilate isomerase activity"/>
    <property type="evidence" value="ECO:0007669"/>
    <property type="project" value="UniProtKB-UniRule"/>
</dbReference>
<dbReference type="GO" id="GO:0000162">
    <property type="term" value="P:L-tryptophan biosynthetic process"/>
    <property type="evidence" value="ECO:0007669"/>
    <property type="project" value="UniProtKB-UniRule"/>
</dbReference>
<dbReference type="CDD" id="cd00405">
    <property type="entry name" value="PRAI"/>
    <property type="match status" value="1"/>
</dbReference>
<dbReference type="FunFam" id="3.20.20.70:FF:000075">
    <property type="entry name" value="Tryptophan biosynthesis protein TRP1"/>
    <property type="match status" value="1"/>
</dbReference>
<dbReference type="Gene3D" id="3.20.20.70">
    <property type="entry name" value="Aldolase class I"/>
    <property type="match status" value="1"/>
</dbReference>
<dbReference type="HAMAP" id="MF_00135">
    <property type="entry name" value="PRAI"/>
    <property type="match status" value="1"/>
</dbReference>
<dbReference type="InterPro" id="IPR013785">
    <property type="entry name" value="Aldolase_TIM"/>
</dbReference>
<dbReference type="InterPro" id="IPR001240">
    <property type="entry name" value="PRAI_dom"/>
</dbReference>
<dbReference type="InterPro" id="IPR011060">
    <property type="entry name" value="RibuloseP-bd_barrel"/>
</dbReference>
<dbReference type="InterPro" id="IPR044643">
    <property type="entry name" value="TrpF_fam"/>
</dbReference>
<dbReference type="PANTHER" id="PTHR42894">
    <property type="entry name" value="N-(5'-PHOSPHORIBOSYL)ANTHRANILATE ISOMERASE"/>
    <property type="match status" value="1"/>
</dbReference>
<dbReference type="PANTHER" id="PTHR42894:SF1">
    <property type="entry name" value="N-(5'-PHOSPHORIBOSYL)ANTHRANILATE ISOMERASE"/>
    <property type="match status" value="1"/>
</dbReference>
<dbReference type="Pfam" id="PF00697">
    <property type="entry name" value="PRAI"/>
    <property type="match status" value="1"/>
</dbReference>
<dbReference type="SUPFAM" id="SSF51366">
    <property type="entry name" value="Ribulose-phoshate binding barrel"/>
    <property type="match status" value="1"/>
</dbReference>